<feature type="initiator methionine" description="Removed" evidence="4">
    <location>
        <position position="1"/>
    </location>
</feature>
<feature type="chain" id="PRO_0000279729" description="Caveolin-1">
    <location>
        <begin position="2"/>
        <end position="178"/>
    </location>
</feature>
<feature type="topological domain" description="Cytoplasmic" evidence="6">
    <location>
        <begin position="2"/>
        <end position="104"/>
    </location>
</feature>
<feature type="intramembrane region" description="Helical" evidence="6">
    <location>
        <begin position="105"/>
        <end position="125"/>
    </location>
</feature>
<feature type="topological domain" description="Cytoplasmic" evidence="6">
    <location>
        <begin position="126"/>
        <end position="178"/>
    </location>
</feature>
<feature type="region of interest" description="Required for homooligomerization" evidence="4">
    <location>
        <begin position="2"/>
        <end position="94"/>
    </location>
</feature>
<feature type="region of interest" description="Interaction with CAVIN3" evidence="4">
    <location>
        <begin position="82"/>
        <end position="94"/>
    </location>
</feature>
<feature type="region of interest" description="Interacts with SPRY1, SPRY2, SPRY3 and SPRY4" evidence="3">
    <location>
        <begin position="131"/>
        <end position="142"/>
    </location>
</feature>
<feature type="region of interest" description="Interacts with SPRY1, SPRY2, and SPRY4" evidence="3">
    <location>
        <begin position="149"/>
        <end position="160"/>
    </location>
</feature>
<feature type="region of interest" description="Interacts with SPRY1, SPRY2, SPRY3 and SPRY4" evidence="3">
    <location>
        <begin position="167"/>
        <end position="178"/>
    </location>
</feature>
<feature type="modified residue" description="N-acetylserine" evidence="4">
    <location>
        <position position="2"/>
    </location>
</feature>
<feature type="modified residue" description="Phosphoserine" evidence="2">
    <location>
        <position position="2"/>
    </location>
</feature>
<feature type="modified residue" description="N6-acetyllysine; alternate" evidence="4">
    <location>
        <position position="5"/>
    </location>
</feature>
<feature type="modified residue" description="Phosphotyrosine" evidence="4">
    <location>
        <position position="6"/>
    </location>
</feature>
<feature type="modified residue" description="Phosphoserine" evidence="3">
    <location>
        <position position="9"/>
    </location>
</feature>
<feature type="modified residue" description="Phosphotyrosine; by ABL1" evidence="3">
    <location>
        <position position="14"/>
    </location>
</feature>
<feature type="modified residue" description="Phosphotyrosine" evidence="4">
    <location>
        <position position="25"/>
    </location>
</feature>
<feature type="lipid moiety-binding region" description="S-palmitoyl cysteine" evidence="1">
    <location>
        <position position="133"/>
    </location>
</feature>
<feature type="lipid moiety-binding region" description="S-palmitoyl cysteine" evidence="1">
    <location>
        <position position="143"/>
    </location>
</feature>
<feature type="lipid moiety-binding region" description="S-palmitoyl cysteine" evidence="1">
    <location>
        <position position="156"/>
    </location>
</feature>
<feature type="cross-link" description="Glycyl lysine isopeptide (Lys-Gly) (interchain with G-Cter in ubiquitin); alternate" evidence="4">
    <location>
        <position position="5"/>
    </location>
</feature>
<feature type="cross-link" description="Glycyl lysine isopeptide (Lys-Gly) (interchain with G-Cter in ubiquitin)" evidence="4">
    <location>
        <position position="26"/>
    </location>
</feature>
<feature type="cross-link" description="Glycyl lysine isopeptide (Lys-Gly) (interchain with G-Cter in ubiquitin)" evidence="4">
    <location>
        <position position="30"/>
    </location>
</feature>
<feature type="cross-link" description="Glycyl lysine isopeptide (Lys-Gly) (interchain with G-Cter in ubiquitin)" evidence="4">
    <location>
        <position position="39"/>
    </location>
</feature>
<feature type="cross-link" description="Glycyl lysine isopeptide (Lys-Gly) (interchain with G-Cter in ubiquitin)" evidence="4">
    <location>
        <position position="47"/>
    </location>
</feature>
<feature type="cross-link" description="Glycyl lysine isopeptide (Lys-Gly) (interchain with G-Cter in ubiquitin)" evidence="4">
    <location>
        <position position="57"/>
    </location>
</feature>
<keyword id="KW-0007">Acetylation</keyword>
<keyword id="KW-1003">Cell membrane</keyword>
<keyword id="KW-0333">Golgi apparatus</keyword>
<keyword id="KW-1017">Isopeptide bond</keyword>
<keyword id="KW-0449">Lipoprotein</keyword>
<keyword id="KW-0472">Membrane</keyword>
<keyword id="KW-0564">Palmitate</keyword>
<keyword id="KW-0597">Phosphoprotein</keyword>
<keyword id="KW-1185">Reference proteome</keyword>
<keyword id="KW-0832">Ubl conjugation</keyword>
<comment type="function">
    <text evidence="3 4">May act as a scaffolding protein within caveolar membranes. Forms a stable heterooligomeric complex with CAV2 that targets to lipid rafts and drives caveolae formation. Mediates the recruitment of CAVIN proteins (CAVIN1/2/3/4) to the caveolae (By similarity). Interacts directly with G-protein alpha subunits and can functionally regulate their activity (By similarity). Involved in the costimulatory signal essential for T-cell receptor (TCR)-mediated T-cell activation. Its binding to DPP4 induces T-cell proliferation and NF-kappa-B activation in a T-cell receptor/CD3-dependent manner (By similarity). Recruits CTNNB1 to caveolar membranes and may regulate CTNNB1-mediated signaling through the Wnt pathway (By similarity). Negatively regulates TGFB1-mediated activation of SMAD2/3 by mediating the internalization of TGFBR1 from membrane rafts leading to its subsequent degradation (By similarity). Binds 20(S)-hydroxycholesterol (20(S)-OHC) (By similarity).</text>
</comment>
<comment type="subunit">
    <text evidence="2 3 4 5">Homooligomer. Interacts with GLIPR2. Interacts with NOSTRIN (By similarity). Interacts with SNAP25 and STX1A (By similarity). Interacts (via the N-terminus) with DPP4; the interaction is direct (By similarity). Interacts with CTNNB1, CDH1 and JUP. Interacts with PACSIN2; this interaction induces membrane tubulation (By similarity). Interacts with SLC7A9 (By similarity). Interacts with BMX and BTK. Interacts with TGFBR1. Interacts with CAVIN3 (via leucine-zipper domain) in a cholesterol-sensitive manner. Interacts with CAVIN1. Interacts with EHD2 in a cholesterol-dependent manner. Forms a ternary complex with UBXN6 and VCP; mediates CAV1 targeting to lysosomes for degradation. Interacts with ABCG1; this interaction regulates ABCG1-mediated cholesterol efflux (By similarity). Interacts with NEU3; this interaction enhances NEU3 sialidase activity within caveola. Interacts (via C-terminus) with SPRY1, SPRY2 (via C-terminus), SPRY3, and SPRY4 (By similarity). Interacts with IGFBP5; this interaction allows trafficking of IGFBP5 from the plasma membrane to the nucleus (By similarity).</text>
</comment>
<comment type="subcellular location">
    <subcellularLocation>
        <location evidence="1">Golgi apparatus membrane</location>
        <topology evidence="1">Peripheral membrane protein</topology>
    </subcellularLocation>
    <subcellularLocation>
        <location evidence="1">Cell membrane</location>
        <topology evidence="1">Peripheral membrane protein</topology>
    </subcellularLocation>
    <subcellularLocation>
        <location evidence="3">Membrane</location>
        <location evidence="3">Caveola</location>
        <topology evidence="1">Peripheral membrane protein</topology>
    </subcellularLocation>
    <subcellularLocation>
        <location evidence="4">Membrane raft</location>
    </subcellularLocation>
    <text evidence="1">Colocalized with DPP4 in membrane rafts. Potential hairpin-like structure in the membrane. Membrane protein of caveolae (By similarity).</text>
</comment>
<comment type="PTM">
    <text evidence="4">Phosphorylated at Tyr-14 by ABL1 in response to oxidative stress.</text>
</comment>
<comment type="PTM">
    <text evidence="4">Ubiquitinated. Undergo monoubiquitination and multi- and/or polyubiquitination. Monoubiquitination of N-terminal lysines promotes integration in a ternary complex with UBXN6 and VCP which promotes oligomeric CAV1 targeting to lysosomes for degradation. Ubiquitinated by ZNRF1; leading to degradation and modulation of the TLR4-mediated immune response.</text>
</comment>
<comment type="similarity">
    <text evidence="7">Belongs to the caveolin family.</text>
</comment>
<protein>
    <recommendedName>
        <fullName>Caveolin-1</fullName>
    </recommendedName>
</protein>
<proteinExistence type="inferred from homology"/>
<dbReference type="EMBL" id="DP000234">
    <property type="protein sequence ID" value="AAR16230.1"/>
    <property type="molecule type" value="Genomic_DNA"/>
</dbReference>
<dbReference type="RefSeq" id="NP_001019334.1">
    <property type="nucleotide sequence ID" value="NM_001024163.1"/>
</dbReference>
<dbReference type="SMR" id="A0M8S7"/>
<dbReference type="FunCoup" id="A0M8S7">
    <property type="interactions" value="59"/>
</dbReference>
<dbReference type="STRING" id="9685.ENSFCAP00000029296"/>
<dbReference type="PaxDb" id="9685-ENSFCAP00000025307"/>
<dbReference type="Ensembl" id="ENSFCAT00000046169.3">
    <property type="protein sequence ID" value="ENSFCAP00000029296.1"/>
    <property type="gene ID" value="ENSFCAG00000034785.3"/>
</dbReference>
<dbReference type="GeneID" id="493668"/>
<dbReference type="KEGG" id="fca:493668"/>
<dbReference type="CTD" id="857"/>
<dbReference type="VGNC" id="VGNC:69367">
    <property type="gene designation" value="CAV1"/>
</dbReference>
<dbReference type="eggNOG" id="ENOG502QUK5">
    <property type="taxonomic scope" value="Eukaryota"/>
</dbReference>
<dbReference type="GeneTree" id="ENSGT00950000183006"/>
<dbReference type="HOGENOM" id="CLU_102582_0_0_1"/>
<dbReference type="InParanoid" id="A0M8S7"/>
<dbReference type="OMA" id="MSGSKYV"/>
<dbReference type="OrthoDB" id="5917823at2759"/>
<dbReference type="Proteomes" id="UP000011712">
    <property type="component" value="Chromosome A2"/>
</dbReference>
<dbReference type="Bgee" id="ENSFCAG00000034785">
    <property type="expression patterns" value="Expressed in zone of skin and 11 other cell types or tissues"/>
</dbReference>
<dbReference type="GO" id="GO:0005901">
    <property type="term" value="C:caveola"/>
    <property type="evidence" value="ECO:0000250"/>
    <property type="project" value="UniProtKB"/>
</dbReference>
<dbReference type="GO" id="GO:0031410">
    <property type="term" value="C:cytoplasmic vesicle"/>
    <property type="evidence" value="ECO:0000318"/>
    <property type="project" value="GO_Central"/>
</dbReference>
<dbReference type="GO" id="GO:0005768">
    <property type="term" value="C:endosome"/>
    <property type="evidence" value="ECO:0000250"/>
    <property type="project" value="UniProtKB"/>
</dbReference>
<dbReference type="GO" id="GO:0005794">
    <property type="term" value="C:Golgi apparatus"/>
    <property type="evidence" value="ECO:0000318"/>
    <property type="project" value="GO_Central"/>
</dbReference>
<dbReference type="GO" id="GO:0000139">
    <property type="term" value="C:Golgi membrane"/>
    <property type="evidence" value="ECO:0007669"/>
    <property type="project" value="UniProtKB-SubCell"/>
</dbReference>
<dbReference type="GO" id="GO:0045121">
    <property type="term" value="C:membrane raft"/>
    <property type="evidence" value="ECO:0000250"/>
    <property type="project" value="UniProtKB"/>
</dbReference>
<dbReference type="GO" id="GO:0048471">
    <property type="term" value="C:perinuclear region of cytoplasm"/>
    <property type="evidence" value="ECO:0000318"/>
    <property type="project" value="GO_Central"/>
</dbReference>
<dbReference type="GO" id="GO:0060090">
    <property type="term" value="F:molecular adaptor activity"/>
    <property type="evidence" value="ECO:0000318"/>
    <property type="project" value="GO_Central"/>
</dbReference>
<dbReference type="GO" id="GO:0008142">
    <property type="term" value="F:oxysterol binding"/>
    <property type="evidence" value="ECO:0000250"/>
    <property type="project" value="UniProtKB"/>
</dbReference>
<dbReference type="GO" id="GO:0019901">
    <property type="term" value="F:protein kinase binding"/>
    <property type="evidence" value="ECO:0000318"/>
    <property type="project" value="GO_Central"/>
</dbReference>
<dbReference type="GO" id="GO:0044325">
    <property type="term" value="F:transmembrane transporter binding"/>
    <property type="evidence" value="ECO:0000318"/>
    <property type="project" value="GO_Central"/>
</dbReference>
<dbReference type="GO" id="GO:0070836">
    <property type="term" value="P:caveola assembly"/>
    <property type="evidence" value="ECO:0000318"/>
    <property type="project" value="GO_Central"/>
</dbReference>
<dbReference type="GO" id="GO:0030154">
    <property type="term" value="P:cell differentiation"/>
    <property type="evidence" value="ECO:0000318"/>
    <property type="project" value="GO_Central"/>
</dbReference>
<dbReference type="GO" id="GO:0001937">
    <property type="term" value="P:negative regulation of endothelial cell proliferation"/>
    <property type="evidence" value="ECO:0000318"/>
    <property type="project" value="GO_Central"/>
</dbReference>
<dbReference type="GO" id="GO:0031623">
    <property type="term" value="P:receptor internalization"/>
    <property type="evidence" value="ECO:0000250"/>
    <property type="project" value="UniProtKB"/>
</dbReference>
<dbReference type="GO" id="GO:0051480">
    <property type="term" value="P:regulation of cytosolic calcium ion concentration"/>
    <property type="evidence" value="ECO:0000318"/>
    <property type="project" value="GO_Central"/>
</dbReference>
<dbReference type="GO" id="GO:0031295">
    <property type="term" value="P:T cell costimulation"/>
    <property type="evidence" value="ECO:0000250"/>
    <property type="project" value="UniProtKB"/>
</dbReference>
<dbReference type="InterPro" id="IPR001612">
    <property type="entry name" value="Caveolin"/>
</dbReference>
<dbReference type="InterPro" id="IPR018361">
    <property type="entry name" value="Caveolin_CS"/>
</dbReference>
<dbReference type="PANTHER" id="PTHR10844">
    <property type="entry name" value="CAVEOLIN"/>
    <property type="match status" value="1"/>
</dbReference>
<dbReference type="PANTHER" id="PTHR10844:SF18">
    <property type="entry name" value="CAVEOLIN-1"/>
    <property type="match status" value="1"/>
</dbReference>
<dbReference type="Pfam" id="PF01146">
    <property type="entry name" value="Caveolin"/>
    <property type="match status" value="1"/>
</dbReference>
<dbReference type="PROSITE" id="PS01210">
    <property type="entry name" value="CAVEOLIN"/>
    <property type="match status" value="1"/>
</dbReference>
<accession>A0M8S7</accession>
<sequence>MSGGKYVDSEGHLYTVPIREQGNIYKPNNKAMAEEINEKQVYDAHTKEIDLVNRDPKHLNDDVVKIDFEDVIAEPEGTHSFDGIWKASFTTFTVTKYWFYRLLSALFGIPMALIWGIYFAILSFLHIWAVVPCIKSFLIEIQCISRVYSIYVHTFCDPFFEAVGKIFSNIRINMQKEI</sequence>
<reference key="1">
    <citation type="journal article" date="2003" name="Nature">
        <title>Comparative analyses of multi-species sequences from targeted genomic regions.</title>
        <authorList>
            <person name="Thomas J.W."/>
            <person name="Touchman J.W."/>
            <person name="Blakesley R.W."/>
            <person name="Bouffard G.G."/>
            <person name="Beckstrom-Sternberg S.M."/>
            <person name="Margulies E.H."/>
            <person name="Blanchette M."/>
            <person name="Siepel A.C."/>
            <person name="Thomas P.J."/>
            <person name="McDowell J.C."/>
            <person name="Maskeri B."/>
            <person name="Hansen N.F."/>
            <person name="Schwartz M.S."/>
            <person name="Weber R.J."/>
            <person name="Kent W.J."/>
            <person name="Karolchik D."/>
            <person name="Bruen T.C."/>
            <person name="Bevan R."/>
            <person name="Cutler D.J."/>
            <person name="Schwartz S."/>
            <person name="Elnitski L."/>
            <person name="Idol J.R."/>
            <person name="Prasad A.B."/>
            <person name="Lee-Lin S.-Q."/>
            <person name="Maduro V.V.B."/>
            <person name="Summers T.J."/>
            <person name="Portnoy M.E."/>
            <person name="Dietrich N.L."/>
            <person name="Akhter N."/>
            <person name="Ayele K."/>
            <person name="Benjamin B."/>
            <person name="Cariaga K."/>
            <person name="Brinkley C.P."/>
            <person name="Brooks S.Y."/>
            <person name="Granite S."/>
            <person name="Guan X."/>
            <person name="Gupta J."/>
            <person name="Haghighi P."/>
            <person name="Ho S.-L."/>
            <person name="Huang M.C."/>
            <person name="Karlins E."/>
            <person name="Laric P.L."/>
            <person name="Legaspi R."/>
            <person name="Lim M.J."/>
            <person name="Maduro Q.L."/>
            <person name="Masiello C.A."/>
            <person name="Mastrian S.D."/>
            <person name="McCloskey J.C."/>
            <person name="Pearson R."/>
            <person name="Stantripop S."/>
            <person name="Tiongson E.E."/>
            <person name="Tran J.T."/>
            <person name="Tsurgeon C."/>
            <person name="Vogt J.L."/>
            <person name="Walker M.A."/>
            <person name="Wetherby K.D."/>
            <person name="Wiggins L.S."/>
            <person name="Young A.C."/>
            <person name="Zhang L.-H."/>
            <person name="Osoegawa K."/>
            <person name="Zhu B."/>
            <person name="Zhao B."/>
            <person name="Shu C.L."/>
            <person name="De Jong P.J."/>
            <person name="Lawrence C.E."/>
            <person name="Smit A.F."/>
            <person name="Chakravarti A."/>
            <person name="Haussler D."/>
            <person name="Green P."/>
            <person name="Miller W."/>
            <person name="Green E.D."/>
        </authorList>
    </citation>
    <scope>NUCLEOTIDE SEQUENCE [LARGE SCALE GENOMIC DNA]</scope>
</reference>
<evidence type="ECO:0000250" key="1"/>
<evidence type="ECO:0000250" key="2">
    <source>
        <dbReference type="UniProtKB" id="P41350"/>
    </source>
</evidence>
<evidence type="ECO:0000250" key="3">
    <source>
        <dbReference type="UniProtKB" id="P49817"/>
    </source>
</evidence>
<evidence type="ECO:0000250" key="4">
    <source>
        <dbReference type="UniProtKB" id="Q03135"/>
    </source>
</evidence>
<evidence type="ECO:0000250" key="5">
    <source>
        <dbReference type="UniProtKB" id="Q2IBA5"/>
    </source>
</evidence>
<evidence type="ECO:0000255" key="6"/>
<evidence type="ECO:0000305" key="7"/>
<gene>
    <name type="primary">CAV1</name>
</gene>
<organism>
    <name type="scientific">Felis catus</name>
    <name type="common">Cat</name>
    <name type="synonym">Felis silvestris catus</name>
    <dbReference type="NCBI Taxonomy" id="9685"/>
    <lineage>
        <taxon>Eukaryota</taxon>
        <taxon>Metazoa</taxon>
        <taxon>Chordata</taxon>
        <taxon>Craniata</taxon>
        <taxon>Vertebrata</taxon>
        <taxon>Euteleostomi</taxon>
        <taxon>Mammalia</taxon>
        <taxon>Eutheria</taxon>
        <taxon>Laurasiatheria</taxon>
        <taxon>Carnivora</taxon>
        <taxon>Feliformia</taxon>
        <taxon>Felidae</taxon>
        <taxon>Felinae</taxon>
        <taxon>Felis</taxon>
    </lineage>
</organism>
<name>CAV1_FELCA</name>